<gene>
    <name type="primary">ldha</name>
</gene>
<dbReference type="EC" id="1.1.1.27" evidence="2"/>
<dbReference type="EMBL" id="AF079829">
    <property type="protein sequence ID" value="AAC63287.1"/>
    <property type="molecule type" value="mRNA"/>
</dbReference>
<dbReference type="SMR" id="P69081"/>
<dbReference type="UniPathway" id="UPA00554">
    <property type="reaction ID" value="UER00611"/>
</dbReference>
<dbReference type="GO" id="GO:0005737">
    <property type="term" value="C:cytoplasm"/>
    <property type="evidence" value="ECO:0007669"/>
    <property type="project" value="UniProtKB-SubCell"/>
</dbReference>
<dbReference type="GO" id="GO:0004459">
    <property type="term" value="F:L-lactate dehydrogenase activity"/>
    <property type="evidence" value="ECO:0007669"/>
    <property type="project" value="UniProtKB-EC"/>
</dbReference>
<dbReference type="GO" id="GO:0006089">
    <property type="term" value="P:lactate metabolic process"/>
    <property type="evidence" value="ECO:0007669"/>
    <property type="project" value="TreeGrafter"/>
</dbReference>
<dbReference type="CDD" id="cd05293">
    <property type="entry name" value="LDH_1"/>
    <property type="match status" value="1"/>
</dbReference>
<dbReference type="FunFam" id="3.40.50.720:FF:000029">
    <property type="entry name" value="L-lactate dehydrogenase A chain"/>
    <property type="match status" value="1"/>
</dbReference>
<dbReference type="FunFam" id="3.90.110.10:FF:000003">
    <property type="entry name" value="L-lactate dehydrogenase A chain"/>
    <property type="match status" value="1"/>
</dbReference>
<dbReference type="Gene3D" id="3.90.110.10">
    <property type="entry name" value="Lactate dehydrogenase/glycoside hydrolase, family 4, C-terminal"/>
    <property type="match status" value="1"/>
</dbReference>
<dbReference type="Gene3D" id="3.40.50.720">
    <property type="entry name" value="NAD(P)-binding Rossmann-like Domain"/>
    <property type="match status" value="1"/>
</dbReference>
<dbReference type="HAMAP" id="MF_00488">
    <property type="entry name" value="Lactate_dehydrog"/>
    <property type="match status" value="1"/>
</dbReference>
<dbReference type="InterPro" id="IPR001557">
    <property type="entry name" value="L-lactate/malate_DH"/>
</dbReference>
<dbReference type="InterPro" id="IPR011304">
    <property type="entry name" value="L-lactate_DH"/>
</dbReference>
<dbReference type="InterPro" id="IPR018177">
    <property type="entry name" value="L-lactate_DH_AS"/>
</dbReference>
<dbReference type="InterPro" id="IPR022383">
    <property type="entry name" value="Lactate/malate_DH_C"/>
</dbReference>
<dbReference type="InterPro" id="IPR001236">
    <property type="entry name" value="Lactate/malate_DH_N"/>
</dbReference>
<dbReference type="InterPro" id="IPR015955">
    <property type="entry name" value="Lactate_DH/Glyco_Ohase_4_C"/>
</dbReference>
<dbReference type="InterPro" id="IPR036291">
    <property type="entry name" value="NAD(P)-bd_dom_sf"/>
</dbReference>
<dbReference type="NCBIfam" id="TIGR01771">
    <property type="entry name" value="L-LDH-NAD"/>
    <property type="match status" value="1"/>
</dbReference>
<dbReference type="NCBIfam" id="NF000824">
    <property type="entry name" value="PRK00066.1"/>
    <property type="match status" value="1"/>
</dbReference>
<dbReference type="NCBIfam" id="NF004863">
    <property type="entry name" value="PRK06223.1"/>
    <property type="match status" value="1"/>
</dbReference>
<dbReference type="PANTHER" id="PTHR43128">
    <property type="entry name" value="L-2-HYDROXYCARBOXYLATE DEHYDROGENASE (NAD(P)(+))"/>
    <property type="match status" value="1"/>
</dbReference>
<dbReference type="PANTHER" id="PTHR43128:SF10">
    <property type="entry name" value="L-LACTATE DEHYDROGENASE A CHAIN"/>
    <property type="match status" value="1"/>
</dbReference>
<dbReference type="Pfam" id="PF02866">
    <property type="entry name" value="Ldh_1_C"/>
    <property type="match status" value="1"/>
</dbReference>
<dbReference type="Pfam" id="PF00056">
    <property type="entry name" value="Ldh_1_N"/>
    <property type="match status" value="1"/>
</dbReference>
<dbReference type="PIRSF" id="PIRSF000102">
    <property type="entry name" value="Lac_mal_DH"/>
    <property type="match status" value="1"/>
</dbReference>
<dbReference type="PRINTS" id="PR00086">
    <property type="entry name" value="LLDHDRGNASE"/>
</dbReference>
<dbReference type="SUPFAM" id="SSF56327">
    <property type="entry name" value="LDH C-terminal domain-like"/>
    <property type="match status" value="1"/>
</dbReference>
<dbReference type="SUPFAM" id="SSF51735">
    <property type="entry name" value="NAD(P)-binding Rossmann-fold domains"/>
    <property type="match status" value="1"/>
</dbReference>
<dbReference type="PROSITE" id="PS00064">
    <property type="entry name" value="L_LDH"/>
    <property type="match status" value="1"/>
</dbReference>
<sequence length="331" mass="36183">MSTKEKLISHVMKEEPVGSRNKVTVVGVGMVGMASAISILLKDLCDELAMVDVMEDKLKGEVMDLQHGSLFLKTKIVGDKDYSVTANSKVVVVTAGARQQEGESRLNLVQRNVNIFKFIIPNIVKYSPNCILMVVSNPVDILTYVAWKLSGFPRHRVIGSGTNLDSARFRHLIGEKLHLHPSSCHAWIVGEHGDSSVPVWSGVNVAGVSLQGLNPQMGTEGDGENWKAIHKEVVDGAYEVIKLKGYTSWAIGMSVADLVESIIKNMHKVHPVSTLVQGMHGVKDEVFLSVPCVLGNSGLTDVIHMTLKAEEEKQLQKSAETLWGVQKELTL</sequence>
<feature type="initiator methionine" description="Removed" evidence="1">
    <location>
        <position position="1"/>
    </location>
</feature>
<feature type="chain" id="PRO_0000168432" description="L-lactate dehydrogenase A chain">
    <location>
        <begin position="2"/>
        <end position="331"/>
    </location>
</feature>
<feature type="active site" description="Proton acceptor" evidence="1">
    <location>
        <position position="192"/>
    </location>
</feature>
<feature type="binding site" evidence="1">
    <location>
        <begin position="29"/>
        <end position="57"/>
    </location>
    <ligand>
        <name>NAD(+)</name>
        <dbReference type="ChEBI" id="CHEBI:57540"/>
    </ligand>
</feature>
<feature type="binding site" evidence="1">
    <location>
        <position position="98"/>
    </location>
    <ligand>
        <name>NAD(+)</name>
        <dbReference type="ChEBI" id="CHEBI:57540"/>
    </ligand>
</feature>
<feature type="binding site" evidence="1">
    <location>
        <position position="105"/>
    </location>
    <ligand>
        <name>substrate</name>
    </ligand>
</feature>
<feature type="binding site" evidence="1">
    <location>
        <position position="137"/>
    </location>
    <ligand>
        <name>NAD(+)</name>
        <dbReference type="ChEBI" id="CHEBI:57540"/>
    </ligand>
</feature>
<feature type="binding site" evidence="1">
    <location>
        <position position="137"/>
    </location>
    <ligand>
        <name>substrate</name>
    </ligand>
</feature>
<feature type="binding site" evidence="1">
    <location>
        <position position="168"/>
    </location>
    <ligand>
        <name>substrate</name>
    </ligand>
</feature>
<feature type="binding site" evidence="1">
    <location>
        <position position="247"/>
    </location>
    <ligand>
        <name>substrate</name>
    </ligand>
</feature>
<protein>
    <recommendedName>
        <fullName>L-lactate dehydrogenase A chain</fullName>
        <shortName>LDH-A</shortName>
        <ecNumber evidence="2">1.1.1.27</ecNumber>
    </recommendedName>
</protein>
<comment type="function">
    <text evidence="2">Interconverts simultaneously and stereospecifically pyruvate and lactate with concomitant interconversion of NADH and NAD(+).</text>
</comment>
<comment type="catalytic activity">
    <reaction evidence="2">
        <text>(S)-lactate + NAD(+) = pyruvate + NADH + H(+)</text>
        <dbReference type="Rhea" id="RHEA:23444"/>
        <dbReference type="ChEBI" id="CHEBI:15361"/>
        <dbReference type="ChEBI" id="CHEBI:15378"/>
        <dbReference type="ChEBI" id="CHEBI:16651"/>
        <dbReference type="ChEBI" id="CHEBI:57540"/>
        <dbReference type="ChEBI" id="CHEBI:57945"/>
        <dbReference type="EC" id="1.1.1.27"/>
    </reaction>
    <physiologicalReaction direction="left-to-right" evidence="2">
        <dbReference type="Rhea" id="RHEA:23445"/>
    </physiologicalReaction>
    <physiologicalReaction direction="right-to-left" evidence="2">
        <dbReference type="Rhea" id="RHEA:23446"/>
    </physiologicalReaction>
</comment>
<comment type="pathway">
    <text evidence="2">Fermentation; pyruvate fermentation to lactate; (S)-lactate from pyruvate: step 1/1.</text>
</comment>
<comment type="subunit">
    <text evidence="1">Homotetramer.</text>
</comment>
<comment type="subcellular location">
    <subcellularLocation>
        <location evidence="1">Cytoplasm</location>
    </subcellularLocation>
</comment>
<comment type="similarity">
    <text evidence="3">Belongs to the LDH/MDH superfamily. LDH family.</text>
</comment>
<accession>P69081</accession>
<accession>O93619</accession>
<reference key="1">
    <citation type="journal article" date="1998" name="Proc. Natl. Acad. Sci. U.S.A.">
        <title>Hot spots in cold adaptation: localized increases in conformational flexibility in lactate dehydrogenase A4 orthologs of Antarctic notothenioid fishes.</title>
        <authorList>
            <person name="Fields P.A."/>
            <person name="Somero G.N."/>
        </authorList>
    </citation>
    <scope>NUCLEOTIDE SEQUENCE [MRNA]</scope>
    <source>
        <tissue>Muscle</tissue>
    </source>
</reference>
<proteinExistence type="evidence at transcript level"/>
<organism>
    <name type="scientific">Chionodraco rastrospinosus</name>
    <name type="common">Ocellated icefish</name>
    <dbReference type="NCBI Taxonomy" id="34790"/>
    <lineage>
        <taxon>Eukaryota</taxon>
        <taxon>Metazoa</taxon>
        <taxon>Chordata</taxon>
        <taxon>Craniata</taxon>
        <taxon>Vertebrata</taxon>
        <taxon>Euteleostomi</taxon>
        <taxon>Actinopterygii</taxon>
        <taxon>Neopterygii</taxon>
        <taxon>Teleostei</taxon>
        <taxon>Neoteleostei</taxon>
        <taxon>Acanthomorphata</taxon>
        <taxon>Eupercaria</taxon>
        <taxon>Perciformes</taxon>
        <taxon>Notothenioidei</taxon>
        <taxon>Channichthyidae</taxon>
        <taxon>Chionodraco</taxon>
    </lineage>
</organism>
<name>LDHA_CHIRA</name>
<evidence type="ECO:0000250" key="1"/>
<evidence type="ECO:0000250" key="2">
    <source>
        <dbReference type="UniProtKB" id="P00338"/>
    </source>
</evidence>
<evidence type="ECO:0000305" key="3"/>
<keyword id="KW-0963">Cytoplasm</keyword>
<keyword id="KW-0520">NAD</keyword>
<keyword id="KW-0560">Oxidoreductase</keyword>